<comment type="function">
    <text evidence="8 9 10 11 12 13 14 16 17 18">Plays an important role in preventing glycogen hyperphosphorylation and the formation of insoluble aggregates, via its activity as glycogen phosphatase, and by promoting the ubiquitination of proteins involved in glycogen metabolism via its interaction with the E3 ubiquitin ligase NHLRC1/malin (PubMed:18040046, PubMed:18852261, PubMed:19036738, PubMed:23663739, PubMed:24068615, PubMed:24430976). Dephosphorylates phosphotyrosine and synthetic substrates, such as para-nitrophenylphosphate (pNPP), and has low activity with phosphoserine and phosphothreonine substrates (in vitro) (PubMed:16971387, PubMed:24430976). Has also been shown to dephosphorylate MAPT (PubMed:19542233). Shows strong phosphatase activity towards complex carbohydrates in vitro, avoiding glycogen hyperphosphorylation which is associated with reduced branching and formation of insoluble aggregates (PubMed:18040046, PubMed:18852261, PubMed:23663739). Forms a complex with NHLRC1/malin and HSP70, which suppresses the cellular toxicity of misfolded proteins by promoting their degradation through the ubiquitin-proteasome system (UPS) (PubMed:19036738, PubMed:24068615). Acts as a scaffold protein to facilitate PPP1R3C/PTG ubiquitination by NHLRC1/malin. Also promotes proteasome-independent protein degradation through the macroautophagy pathway (PubMed:20453062).</text>
</comment>
<comment type="catalytic activity">
    <reaction evidence="4 8">
        <text>O-phospho-L-tyrosyl-[protein] + H2O = L-tyrosyl-[protein] + phosphate</text>
        <dbReference type="Rhea" id="RHEA:10684"/>
        <dbReference type="Rhea" id="RHEA-COMP:10136"/>
        <dbReference type="Rhea" id="RHEA-COMP:20101"/>
        <dbReference type="ChEBI" id="CHEBI:15377"/>
        <dbReference type="ChEBI" id="CHEBI:43474"/>
        <dbReference type="ChEBI" id="CHEBI:46858"/>
        <dbReference type="ChEBI" id="CHEBI:61978"/>
        <dbReference type="EC" id="3.1.3.48"/>
    </reaction>
</comment>
<comment type="catalytic activity">
    <reaction>
        <text>O-phospho-L-seryl-[protein] + H2O = L-seryl-[protein] + phosphate</text>
        <dbReference type="Rhea" id="RHEA:20629"/>
        <dbReference type="Rhea" id="RHEA-COMP:9863"/>
        <dbReference type="Rhea" id="RHEA-COMP:11604"/>
        <dbReference type="ChEBI" id="CHEBI:15377"/>
        <dbReference type="ChEBI" id="CHEBI:29999"/>
        <dbReference type="ChEBI" id="CHEBI:43474"/>
        <dbReference type="ChEBI" id="CHEBI:83421"/>
        <dbReference type="EC" id="3.1.3.16"/>
    </reaction>
</comment>
<comment type="catalytic activity">
    <reaction>
        <text>O-phospho-L-threonyl-[protein] + H2O = L-threonyl-[protein] + phosphate</text>
        <dbReference type="Rhea" id="RHEA:47004"/>
        <dbReference type="Rhea" id="RHEA-COMP:11060"/>
        <dbReference type="Rhea" id="RHEA-COMP:11605"/>
        <dbReference type="ChEBI" id="CHEBI:15377"/>
        <dbReference type="ChEBI" id="CHEBI:30013"/>
        <dbReference type="ChEBI" id="CHEBI:43474"/>
        <dbReference type="ChEBI" id="CHEBI:61977"/>
        <dbReference type="EC" id="3.1.3.16"/>
    </reaction>
</comment>
<comment type="subunit">
    <text evidence="1 8 11 12 15">Homodimer (PubMed:16971387). Interacts with PPP1R3B, PPP1R3C, HIRIP5, and EPM2AIP1 (By similarity). Binds glycogen and Lafora bodies. Interacts with NHLRC1/malin (via the NHL repeats) (By similarity). Forms a complex with NHLRC1/malin and HSP70 (PubMed:19036738). Interacts with PPP1R3D; in the presence of NHLC1/malin the interaction leads to ubiquitination and autophagic degradation of PPP1R3D (PubMed:23624058). Interacts (via the phosphatase domain) with MAPT/Tau; the interaction dephosphorylates MAPT (PubMed:19542233). Interacts with PRDM8 (By similarity).</text>
</comment>
<comment type="interaction">
    <interactant intactId="EBI-1040928">
        <id>Q9WUA5</id>
    </interactant>
    <interactant intactId="EBI-400793">
        <id>Q9WV60</id>
        <label>Gsk3b</label>
    </interactant>
    <organismsDiffer>false</organismsDiffer>
    <experiments>2</experiments>
</comment>
<comment type="interaction">
    <interactant intactId="EBI-1040928">
        <id>Q9WUA5</id>
    </interactant>
    <interactant intactId="EBI-6426628">
        <id>Q6VVB1</id>
        <label>NHLRC1</label>
    </interactant>
    <organismsDiffer>true</organismsDiffer>
    <experiments>12</experiments>
</comment>
<comment type="subcellular location">
    <subcellularLocation>
        <location evidence="1">Cytoplasm</location>
    </subcellularLocation>
    <subcellularLocation>
        <location evidence="1">Endoplasmic reticulum membrane</location>
        <topology evidence="1">Peripheral membrane protein</topology>
        <orientation evidence="1">Cytoplasmic side</orientation>
    </subcellularLocation>
    <subcellularLocation>
        <location evidence="1">Cell membrane</location>
    </subcellularLocation>
    <text evidence="1">Colocalizes with glycogen synthase in punctate structures in the cytoplasm. Primarily associated with polyribosomes at the rough endoplasmic reticulum, and also detected at the plasma membrane. Under glycogenolytic conditions localizes to the nucleus.</text>
</comment>
<comment type="tissue specificity">
    <text evidence="5 18">Detected in skeletal muscle and in brain (at protein level) (PubMed:24430976). Widely expressed. Higher levels of expression are found in heart, brain, liver, skeletal muscle and kidney (PubMed:10092504).</text>
</comment>
<comment type="developmental stage">
    <text evidence="6">In the embryo, highly expressed at 17 dpc. Detected in all postnatal stages, but highest expression is found at day 160 after birth.</text>
</comment>
<comment type="domain">
    <text evidence="1">The CBM20 domain mediates binding to cytoplasmic glycogen and to Lafora polyglucosan bodies.</text>
</comment>
<comment type="PTM">
    <text evidence="1">Polyubiquitinated by NHLRC1/malin.</text>
</comment>
<comment type="PTM">
    <text evidence="1">Phosphorylation on Ser-25 by AMPK affects the phosphatase activity of the enzyme and its ability to homodimerize and interact with NHLRC1, PPP1R3C or PRKAA2.</text>
</comment>
<comment type="disruption phenotype">
    <text evidence="7 9 10 12 13 14 16 18">Impaired behavioral responses, ataxia, spontaneous myoclonic seizures and progressive accumulation of poorly-branched, insoluble forms of glycogen (Lafora bodies) in liver, brain and skeletal muscle tissue (PubMed:12019206, PubMed:18040046, PubMed:24430976). Expression of both wild-type Epm2a and mutated Epm2a without phosphatase activity can abolish the appearance of Lafora bodies in brain and heart from 7 to over 12 month old mutant mice (PubMed:24430976). At 3 months of age, overall glycogen levels are normal; by 9 months of age, a 3-fold increase in overall glycogen levels and a 6-fold increase in glycogen phosphate levels is observed (PubMed:18040046, PubMed:18852261, PubMed:22669944, PubMed:23663739). Muscle glycogen has an altered structure, with a reduced size, an abnormally high proportion of very short side chains, fewer medium-length chains and an increased number of long chains (PubMed:23663739). Glycogen synthase (Gys1) and 1,4-alpha-glucan-branching enzyme (Gbe1) activities in brain and muscle tissue are normal (PubMed:18040046). 10 month old mice have neurofibrillary tangles (NFTs, aggregates of hyperphosphorylated Mapt/Tau) in brain and muscle tissue, however NFTs are not observed in 4 and 6 month old mice (PubMed:19542233). 3- and 12- month old mice show reduced numbers of autophagosomes in liver extracts, and 3-month old starved mice have increased levels of the autophagy dysfunction marker Map1lc3b/LC3-II and increased levels of ubiquitinated proteins, suggesting impaired macroautophagy (PubMed:20453062).</text>
</comment>
<comment type="similarity">
    <text evidence="20">Belongs to the protein-tyrosine phosphatase family.</text>
</comment>
<name>EPM2A_MOUSE</name>
<evidence type="ECO:0000250" key="1">
    <source>
        <dbReference type="UniProtKB" id="O95278"/>
    </source>
</evidence>
<evidence type="ECO:0000255" key="2">
    <source>
        <dbReference type="PROSITE-ProRule" id="PRU00160"/>
    </source>
</evidence>
<evidence type="ECO:0000255" key="3">
    <source>
        <dbReference type="PROSITE-ProRule" id="PRU00594"/>
    </source>
</evidence>
<evidence type="ECO:0000255" key="4">
    <source>
        <dbReference type="PROSITE-ProRule" id="PRU10044"/>
    </source>
</evidence>
<evidence type="ECO:0000269" key="5">
    <source>
    </source>
</evidence>
<evidence type="ECO:0000269" key="6">
    <source>
    </source>
</evidence>
<evidence type="ECO:0000269" key="7">
    <source>
    </source>
</evidence>
<evidence type="ECO:0000269" key="8">
    <source>
    </source>
</evidence>
<evidence type="ECO:0000269" key="9">
    <source>
    </source>
</evidence>
<evidence type="ECO:0000269" key="10">
    <source>
    </source>
</evidence>
<evidence type="ECO:0000269" key="11">
    <source>
    </source>
</evidence>
<evidence type="ECO:0000269" key="12">
    <source>
    </source>
</evidence>
<evidence type="ECO:0000269" key="13">
    <source>
    </source>
</evidence>
<evidence type="ECO:0000269" key="14">
    <source>
    </source>
</evidence>
<evidence type="ECO:0000269" key="15">
    <source>
    </source>
</evidence>
<evidence type="ECO:0000269" key="16">
    <source>
    </source>
</evidence>
<evidence type="ECO:0000269" key="17">
    <source>
    </source>
</evidence>
<evidence type="ECO:0000269" key="18">
    <source>
    </source>
</evidence>
<evidence type="ECO:0000303" key="19">
    <source>
    </source>
</evidence>
<evidence type="ECO:0000305" key="20"/>
<proteinExistence type="evidence at protein level"/>
<reference key="1">
    <citation type="journal article" date="1999" name="Biochem. Biophys. Res. Commun.">
        <title>Isolation and characterization of mouse homologue for the human epilepsy gene, EPM2A.</title>
        <authorList>
            <person name="Ganesh S."/>
            <person name="Amano K."/>
            <person name="Delgado-Escueta A.V."/>
            <person name="Yamakawa K."/>
        </authorList>
    </citation>
    <scope>NUCLEOTIDE SEQUENCE [MRNA]</scope>
    <scope>TISSUE SPECIFICITY</scope>
    <source>
        <strain>ICR</strain>
        <tissue>Brain</tissue>
    </source>
</reference>
<reference key="2">
    <citation type="journal article" date="2009" name="PLoS Biol.">
        <title>Lineage-specific biology revealed by a finished genome assembly of the mouse.</title>
        <authorList>
            <person name="Church D.M."/>
            <person name="Goodstadt L."/>
            <person name="Hillier L.W."/>
            <person name="Zody M.C."/>
            <person name="Goldstein S."/>
            <person name="She X."/>
            <person name="Bult C.J."/>
            <person name="Agarwala R."/>
            <person name="Cherry J.L."/>
            <person name="DiCuccio M."/>
            <person name="Hlavina W."/>
            <person name="Kapustin Y."/>
            <person name="Meric P."/>
            <person name="Maglott D."/>
            <person name="Birtle Z."/>
            <person name="Marques A.C."/>
            <person name="Graves T."/>
            <person name="Zhou S."/>
            <person name="Teague B."/>
            <person name="Potamousis K."/>
            <person name="Churas C."/>
            <person name="Place M."/>
            <person name="Herschleb J."/>
            <person name="Runnheim R."/>
            <person name="Forrest D."/>
            <person name="Amos-Landgraf J."/>
            <person name="Schwartz D.C."/>
            <person name="Cheng Z."/>
            <person name="Lindblad-Toh K."/>
            <person name="Eichler E.E."/>
            <person name="Ponting C.P."/>
        </authorList>
    </citation>
    <scope>NUCLEOTIDE SEQUENCE [LARGE SCALE GENOMIC DNA]</scope>
    <source>
        <strain>C57BL/6J</strain>
    </source>
</reference>
<reference key="3">
    <citation type="submission" date="2005-07" db="EMBL/GenBank/DDBJ databases">
        <authorList>
            <person name="Mural R.J."/>
            <person name="Adams M.D."/>
            <person name="Myers E.W."/>
            <person name="Smith H.O."/>
            <person name="Venter J.C."/>
        </authorList>
    </citation>
    <scope>NUCLEOTIDE SEQUENCE [LARGE SCALE GENOMIC DNA]</scope>
</reference>
<reference key="4">
    <citation type="journal article" date="2005" name="Science">
        <title>The transcriptional landscape of the mammalian genome.</title>
        <authorList>
            <person name="Carninci P."/>
            <person name="Kasukawa T."/>
            <person name="Katayama S."/>
            <person name="Gough J."/>
            <person name="Frith M.C."/>
            <person name="Maeda N."/>
            <person name="Oyama R."/>
            <person name="Ravasi T."/>
            <person name="Lenhard B."/>
            <person name="Wells C."/>
            <person name="Kodzius R."/>
            <person name="Shimokawa K."/>
            <person name="Bajic V.B."/>
            <person name="Brenner S.E."/>
            <person name="Batalov S."/>
            <person name="Forrest A.R."/>
            <person name="Zavolan M."/>
            <person name="Davis M.J."/>
            <person name="Wilming L.G."/>
            <person name="Aidinis V."/>
            <person name="Allen J.E."/>
            <person name="Ambesi-Impiombato A."/>
            <person name="Apweiler R."/>
            <person name="Aturaliya R.N."/>
            <person name="Bailey T.L."/>
            <person name="Bansal M."/>
            <person name="Baxter L."/>
            <person name="Beisel K.W."/>
            <person name="Bersano T."/>
            <person name="Bono H."/>
            <person name="Chalk A.M."/>
            <person name="Chiu K.P."/>
            <person name="Choudhary V."/>
            <person name="Christoffels A."/>
            <person name="Clutterbuck D.R."/>
            <person name="Crowe M.L."/>
            <person name="Dalla E."/>
            <person name="Dalrymple B.P."/>
            <person name="de Bono B."/>
            <person name="Della Gatta G."/>
            <person name="di Bernardo D."/>
            <person name="Down T."/>
            <person name="Engstrom P."/>
            <person name="Fagiolini M."/>
            <person name="Faulkner G."/>
            <person name="Fletcher C.F."/>
            <person name="Fukushima T."/>
            <person name="Furuno M."/>
            <person name="Futaki S."/>
            <person name="Gariboldi M."/>
            <person name="Georgii-Hemming P."/>
            <person name="Gingeras T.R."/>
            <person name="Gojobori T."/>
            <person name="Green R.E."/>
            <person name="Gustincich S."/>
            <person name="Harbers M."/>
            <person name="Hayashi Y."/>
            <person name="Hensch T.K."/>
            <person name="Hirokawa N."/>
            <person name="Hill D."/>
            <person name="Huminiecki L."/>
            <person name="Iacono M."/>
            <person name="Ikeo K."/>
            <person name="Iwama A."/>
            <person name="Ishikawa T."/>
            <person name="Jakt M."/>
            <person name="Kanapin A."/>
            <person name="Katoh M."/>
            <person name="Kawasawa Y."/>
            <person name="Kelso J."/>
            <person name="Kitamura H."/>
            <person name="Kitano H."/>
            <person name="Kollias G."/>
            <person name="Krishnan S.P."/>
            <person name="Kruger A."/>
            <person name="Kummerfeld S.K."/>
            <person name="Kurochkin I.V."/>
            <person name="Lareau L.F."/>
            <person name="Lazarevic D."/>
            <person name="Lipovich L."/>
            <person name="Liu J."/>
            <person name="Liuni S."/>
            <person name="McWilliam S."/>
            <person name="Madan Babu M."/>
            <person name="Madera M."/>
            <person name="Marchionni L."/>
            <person name="Matsuda H."/>
            <person name="Matsuzawa S."/>
            <person name="Miki H."/>
            <person name="Mignone F."/>
            <person name="Miyake S."/>
            <person name="Morris K."/>
            <person name="Mottagui-Tabar S."/>
            <person name="Mulder N."/>
            <person name="Nakano N."/>
            <person name="Nakauchi H."/>
            <person name="Ng P."/>
            <person name="Nilsson R."/>
            <person name="Nishiguchi S."/>
            <person name="Nishikawa S."/>
            <person name="Nori F."/>
            <person name="Ohara O."/>
            <person name="Okazaki Y."/>
            <person name="Orlando V."/>
            <person name="Pang K.C."/>
            <person name="Pavan W.J."/>
            <person name="Pavesi G."/>
            <person name="Pesole G."/>
            <person name="Petrovsky N."/>
            <person name="Piazza S."/>
            <person name="Reed J."/>
            <person name="Reid J.F."/>
            <person name="Ring B.Z."/>
            <person name="Ringwald M."/>
            <person name="Rost B."/>
            <person name="Ruan Y."/>
            <person name="Salzberg S.L."/>
            <person name="Sandelin A."/>
            <person name="Schneider C."/>
            <person name="Schoenbach C."/>
            <person name="Sekiguchi K."/>
            <person name="Semple C.A."/>
            <person name="Seno S."/>
            <person name="Sessa L."/>
            <person name="Sheng Y."/>
            <person name="Shibata Y."/>
            <person name="Shimada H."/>
            <person name="Shimada K."/>
            <person name="Silva D."/>
            <person name="Sinclair B."/>
            <person name="Sperling S."/>
            <person name="Stupka E."/>
            <person name="Sugiura K."/>
            <person name="Sultana R."/>
            <person name="Takenaka Y."/>
            <person name="Taki K."/>
            <person name="Tammoja K."/>
            <person name="Tan S.L."/>
            <person name="Tang S."/>
            <person name="Taylor M.S."/>
            <person name="Tegner J."/>
            <person name="Teichmann S.A."/>
            <person name="Ueda H.R."/>
            <person name="van Nimwegen E."/>
            <person name="Verardo R."/>
            <person name="Wei C.L."/>
            <person name="Yagi K."/>
            <person name="Yamanishi H."/>
            <person name="Zabarovsky E."/>
            <person name="Zhu S."/>
            <person name="Zimmer A."/>
            <person name="Hide W."/>
            <person name="Bult C."/>
            <person name="Grimmond S.M."/>
            <person name="Teasdale R.D."/>
            <person name="Liu E.T."/>
            <person name="Brusic V."/>
            <person name="Quackenbush J."/>
            <person name="Wahlestedt C."/>
            <person name="Mattick J.S."/>
            <person name="Hume D.A."/>
            <person name="Kai C."/>
            <person name="Sasaki D."/>
            <person name="Tomaru Y."/>
            <person name="Fukuda S."/>
            <person name="Kanamori-Katayama M."/>
            <person name="Suzuki M."/>
            <person name="Aoki J."/>
            <person name="Arakawa T."/>
            <person name="Iida J."/>
            <person name="Imamura K."/>
            <person name="Itoh M."/>
            <person name="Kato T."/>
            <person name="Kawaji H."/>
            <person name="Kawagashira N."/>
            <person name="Kawashima T."/>
            <person name="Kojima M."/>
            <person name="Kondo S."/>
            <person name="Konno H."/>
            <person name="Nakano K."/>
            <person name="Ninomiya N."/>
            <person name="Nishio T."/>
            <person name="Okada M."/>
            <person name="Plessy C."/>
            <person name="Shibata K."/>
            <person name="Shiraki T."/>
            <person name="Suzuki S."/>
            <person name="Tagami M."/>
            <person name="Waki K."/>
            <person name="Watahiki A."/>
            <person name="Okamura-Oho Y."/>
            <person name="Suzuki H."/>
            <person name="Kawai J."/>
            <person name="Hayashizaki Y."/>
        </authorList>
    </citation>
    <scope>NUCLEOTIDE SEQUENCE [LARGE SCALE MRNA] OF 10-137</scope>
    <source>
        <strain>C57BL/6J</strain>
        <tissue>Thymus</tissue>
    </source>
</reference>
<reference key="5">
    <citation type="journal article" date="2001" name="Biochem. Biophys. Res. Commun.">
        <title>Regional and developmental expression of Epm2a gene and its evolutionary conservation.</title>
        <authorList>
            <person name="Ganesh S."/>
            <person name="Agarwala K.L."/>
            <person name="Amano K."/>
            <person name="Suzuki T."/>
            <person name="Delgado-Escueta A.V."/>
            <person name="Yamakawa K."/>
        </authorList>
    </citation>
    <scope>DEVELOPMENTAL STAGE</scope>
</reference>
<reference key="6">
    <citation type="journal article" date="2002" name="Hum. Mol. Genet.">
        <title>Targeted disruption of the Epm2a gene causes formation of Lafora inclusion bodies, neurodegeneration, ataxia, myoclonus epilepsy and impaired behavioral response in mice.</title>
        <authorList>
            <person name="Ganesh S."/>
            <person name="Delgado-Escueta A.V."/>
            <person name="Sakamoto T."/>
            <person name="Avila M.R."/>
            <person name="Machado-Salas J."/>
            <person name="Hoshii Y."/>
            <person name="Akagi T."/>
            <person name="Gomi H."/>
            <person name="Suzuki T."/>
            <person name="Amano K."/>
            <person name="Agarwala K.L."/>
            <person name="Hasegawa Y."/>
            <person name="Bai D.S."/>
            <person name="Ishihara T."/>
            <person name="Hashikawa T."/>
            <person name="Itohara S."/>
            <person name="Cornford E.M."/>
            <person name="Niki H."/>
            <person name="Yamakawa K."/>
        </authorList>
    </citation>
    <scope>DISRUPTION PHENOTYPE</scope>
</reference>
<reference key="7">
    <citation type="journal article" date="2006" name="J. Biol. Chem.">
        <title>Dimerization of Laforin is required for its optimal phosphatase activity, regulation of GSK3beta phosphorylation, and Wnt signaling.</title>
        <authorList>
            <person name="Liu Y."/>
            <person name="Wang Y."/>
            <person name="Wu C."/>
            <person name="Liu Y."/>
            <person name="Zheng P."/>
        </authorList>
    </citation>
    <scope>SUBUNIT</scope>
    <scope>CATALYTIC ACTIVITY</scope>
    <scope>MUTAGENESIS OF TRP-32; PHE-83; ARG-107; THR-193; CYS-265; GLN-292; TYR-293 AND PRO-300</scope>
    <scope>ACTIVE SITE</scope>
</reference>
<reference key="8">
    <citation type="journal article" date="2007" name="Proc. Natl. Acad. Sci. U.S.A.">
        <title>Laforin is a glycogen phosphatase, deficiency of which leads to elevated phosphorylation of glycogen in vivo.</title>
        <authorList>
            <person name="Tagliabracci V.S."/>
            <person name="Turnbull J."/>
            <person name="Wang W."/>
            <person name="Girard J.M."/>
            <person name="Zhao X."/>
            <person name="Skurat A.V."/>
            <person name="Delgado-Escueta A.V."/>
            <person name="Minassian B.A."/>
            <person name="Depaoli-Roach A.A."/>
            <person name="Roach P.J."/>
        </authorList>
    </citation>
    <scope>FUNCTION AS A GLUCAN PHOSPHATASE</scope>
    <scope>CATALYTIC ACTIVITY</scope>
    <scope>DISRUPTION PHENOTYPE</scope>
    <scope>ACTIVE SITE</scope>
    <scope>MUTAGENESIS OF TRP-32 AND CYS-265</scope>
</reference>
<reference key="9">
    <citation type="journal article" date="2008" name="J. Biol. Chem.">
        <title>Abnormal metabolism of glycogen phosphate as a cause for Lafora disease.</title>
        <authorList>
            <person name="Tagliabracci V.S."/>
            <person name="Girard J.M."/>
            <person name="Segvich D."/>
            <person name="Meyer C."/>
            <person name="Turnbull J."/>
            <person name="Zhao X."/>
            <person name="Minassian B.A."/>
            <person name="Depaoli-Roach A.A."/>
            <person name="Roach P.J."/>
        </authorList>
    </citation>
    <scope>FUNCTION IN GLYCOGEN METABOLISM</scope>
    <scope>DISRUPTION PHENOTYPE</scope>
</reference>
<reference key="10">
    <citation type="journal article" date="2009" name="Hum. Mol. Genet.">
        <title>The malin-laforin complex suppresses the cellular toxicity of misfolded proteins by promoting their degradation through the ubiquitin-proteasome system.</title>
        <authorList>
            <person name="Garyali P."/>
            <person name="Siwach P."/>
            <person name="Singh P.K."/>
            <person name="Puri R."/>
            <person name="Mittal S."/>
            <person name="Sengupta S."/>
            <person name="Parihar R."/>
            <person name="Ganesh S."/>
        </authorList>
    </citation>
    <scope>FUNCTION</scope>
    <scope>COMPLEX FORMATION WITH NHLRC1 AND HSP70</scope>
</reference>
<reference key="11">
    <citation type="journal article" date="2009" name="J. Biol. Chem.">
        <title>Hyperphosphorylation and aggregation of Tau in laforin-deficient mice, an animal model for Lafora disease.</title>
        <authorList>
            <person name="Puri R."/>
            <person name="Suzuki T."/>
            <person name="Yamakawa K."/>
            <person name="Ganesh S."/>
        </authorList>
    </citation>
    <scope>FUNCTION</scope>
    <scope>INTERACTION WITH MAPT</scope>
    <scope>DISRUPTION PHENOTYPE</scope>
</reference>
<reference key="12">
    <citation type="journal article" date="2010" name="Hum. Mol. Genet.">
        <title>Laforin, the most common protein mutated in Lafora disease, regulates autophagy.</title>
        <authorList>
            <person name="Aguado C."/>
            <person name="Sarkar S."/>
            <person name="Korolchuk V.I."/>
            <person name="Criado O."/>
            <person name="Vernia S."/>
            <person name="Boya P."/>
            <person name="Sanz P."/>
            <person name="de Cordoba S.R."/>
            <person name="Knecht E."/>
            <person name="Rubinsztein D.C."/>
        </authorList>
    </citation>
    <scope>FUNCTION</scope>
    <scope>DISRUPTION PHENOTYPE</scope>
</reference>
<reference key="13">
    <citation type="journal article" date="2012" name="J. Biol. Chem.">
        <title>Increased laforin and laforin binding to glycogen underlie Lafora body formation in malin-deficient Lafora disease.</title>
        <authorList>
            <person name="Tiberia E."/>
            <person name="Turnbull J."/>
            <person name="Wang T."/>
            <person name="Ruggieri A."/>
            <person name="Zhao X.C."/>
            <person name="Pencea N."/>
            <person name="Israelian J."/>
            <person name="Wang Y."/>
            <person name="Ackerley C.A."/>
            <person name="Wang P."/>
            <person name="Liu Y."/>
            <person name="Minassian B.A."/>
        </authorList>
    </citation>
    <scope>FUNCTION</scope>
    <scope>DISRUPTION PHENOTYPE</scope>
</reference>
<reference key="14">
    <citation type="journal article" date="2013" name="Cell Metab.">
        <title>Hyperphosphorylation of glucosyl C6 carbons and altered structure of glycogen in the neurodegenerative epilepsy Lafora disease.</title>
        <authorList>
            <person name="Nitschke F."/>
            <person name="Wang P."/>
            <person name="Schmieder P."/>
            <person name="Girard J.M."/>
            <person name="Awrey D.E."/>
            <person name="Wang T."/>
            <person name="Israelian J."/>
            <person name="Zhao X."/>
            <person name="Turnbull J."/>
            <person name="Heydenreich M."/>
            <person name="Kleinpeter E."/>
            <person name="Steup M."/>
            <person name="Minassian B.A."/>
        </authorList>
    </citation>
    <scope>DISRUPTION PHENOTYPE</scope>
    <scope>FUNCTION</scope>
</reference>
<reference key="15">
    <citation type="journal article" date="2013" name="Int. J. Biochem. Cell Biol.">
        <title>Glycogenic activity of R6, a protein phosphatase 1 regulatory subunit, is modulated by the laforin-malin complex.</title>
        <authorList>
            <person name="Rubio-Villena C."/>
            <person name="Garcia-Gimeno M.A."/>
            <person name="Sanz P."/>
        </authorList>
    </citation>
    <scope>INTERACTION WITH PPP1R3D</scope>
</reference>
<reference key="16">
    <citation type="journal article" date="2014" name="Brain">
        <title>The phosphatase activity of laforin is dispensable to rescue Epm2a-/-mice from Lafora disease.</title>
        <authorList>
            <person name="Gayarre J."/>
            <person name="Duran-Trio L."/>
            <person name="Criado Garcia O."/>
            <person name="Aguado C."/>
            <person name="Juana-Lopez L."/>
            <person name="Crespo I."/>
            <person name="Knecht E."/>
            <person name="Bovolenta P."/>
            <person name="Rodriguez de Cordoba S."/>
        </authorList>
    </citation>
    <scope>FUNCTION</scope>
    <scope>CATALYTIC ACTIVITY</scope>
    <scope>MUTAGENESIS OF CYS-265</scope>
    <scope>TISSUE SPECIFICITY</scope>
</reference>
<reference key="17">
    <citation type="journal article" date="2014" name="Mol. Neurobiol.">
        <title>Laforin-malin complex degrades polyglucosan bodies in concert with glycogen debranching enzyme and brain isoform glycogen phosphorylase.</title>
        <authorList>
            <person name="Liu Y."/>
            <person name="Zeng L."/>
            <person name="Ma K."/>
            <person name="Baba O."/>
            <person name="Zheng P."/>
            <person name="Liu Y."/>
            <person name="Wang Y."/>
        </authorList>
    </citation>
    <scope>FUNCTION</scope>
</reference>
<protein>
    <recommendedName>
        <fullName evidence="19">Laforin</fullName>
        <ecNumber evidence="8 9 18">3.1.3.-</ecNumber>
        <ecNumber>3.1.3.16</ecNumber>
        <ecNumber evidence="8">3.1.3.48</ecNumber>
    </recommendedName>
    <alternativeName>
        <fullName>Glucan phosphatase</fullName>
    </alternativeName>
    <alternativeName>
        <fullName>Lafora PTPase</fullName>
        <shortName>LAFPTPase</shortName>
    </alternativeName>
</protein>
<accession>Q9WUA5</accession>
<accession>G5E8E2</accession>
<accession>Q8BY80</accession>
<feature type="chain" id="PRO_0000094839" description="Laforin">
    <location>
        <begin position="1"/>
        <end position="330"/>
    </location>
</feature>
<feature type="domain" description="CBM20" evidence="3">
    <location>
        <begin position="1"/>
        <end position="123"/>
    </location>
</feature>
<feature type="domain" description="Tyrosine-protein phosphatase" evidence="2">
    <location>
        <begin position="155"/>
        <end position="322"/>
    </location>
</feature>
<feature type="short sequence motif" description="Glucan phosphatase signature motif CXAGXGR" evidence="1">
    <location>
        <begin position="265"/>
        <end position="271"/>
    </location>
</feature>
<feature type="active site" description="Phosphocysteine intermediate" evidence="2 8 9">
    <location>
        <position position="265"/>
    </location>
</feature>
<feature type="binding site" evidence="1">
    <location>
        <position position="32"/>
    </location>
    <ligand>
        <name>substrate</name>
    </ligand>
</feature>
<feature type="binding site" evidence="1">
    <location>
        <position position="86"/>
    </location>
    <ligand>
        <name>substrate</name>
    </ligand>
</feature>
<feature type="binding site" evidence="1">
    <location>
        <begin position="102"/>
        <end position="106"/>
    </location>
    <ligand>
        <name>substrate</name>
    </ligand>
</feature>
<feature type="binding site" evidence="1">
    <location>
        <position position="196"/>
    </location>
    <ligand>
        <name>substrate</name>
    </ligand>
</feature>
<feature type="binding site" evidence="1">
    <location>
        <position position="234"/>
    </location>
    <ligand>
        <name>substrate</name>
    </ligand>
</feature>
<feature type="binding site" evidence="1">
    <location>
        <position position="240"/>
    </location>
    <ligand>
        <name>substrate</name>
    </ligand>
</feature>
<feature type="binding site" evidence="1">
    <location>
        <begin position="266"/>
        <end position="271"/>
    </location>
    <ligand>
        <name>substrate</name>
    </ligand>
</feature>
<feature type="binding site" evidence="1">
    <location>
        <position position="303"/>
    </location>
    <ligand>
        <name>substrate</name>
    </ligand>
</feature>
<feature type="site" description="Required for homodimerization" evidence="1">
    <location>
        <position position="328"/>
    </location>
</feature>
<feature type="modified residue" description="Phosphoserine; by AMPK" evidence="1">
    <location>
        <position position="25"/>
    </location>
</feature>
<feature type="mutagenesis site" description="Loss of glycogen phosphatase activity. Nearly abolishes phosphatase activity." evidence="8 9">
    <original>W</original>
    <variation>G</variation>
    <location>
        <position position="32"/>
    </location>
</feature>
<feature type="mutagenesis site" description="Abolishes phosphatase activity." evidence="8">
    <original>F</original>
    <variation>L</variation>
    <location>
        <position position="83"/>
    </location>
</feature>
<feature type="mutagenesis site" description="Abolishes phosphatase activity." evidence="8">
    <original>R</original>
    <variation>C</variation>
    <location>
        <position position="107"/>
    </location>
</feature>
<feature type="mutagenesis site" description="Nearly abolishes phosphatase activity." evidence="8">
    <original>T</original>
    <variation>I</variation>
    <location>
        <position position="193"/>
    </location>
</feature>
<feature type="mutagenesis site" description="Loss of phosphatase activity with glycogen and synthetic substrates." evidence="8 9 18">
    <original>C</original>
    <variation>S</variation>
    <location>
        <position position="265"/>
    </location>
</feature>
<feature type="mutagenesis site" description="Abolishes phosphatase activity." evidence="8">
    <original>Q</original>
    <variation>L</variation>
    <location>
        <position position="292"/>
    </location>
</feature>
<feature type="mutagenesis site" description="Nearly abolishes phosphatase activity." evidence="8">
    <original>Y</original>
    <variation>N</variation>
    <location>
        <position position="293"/>
    </location>
</feature>
<feature type="mutagenesis site" description="Abolishes phosphatase activity." evidence="8">
    <original>P</original>
    <variation>L</variation>
    <location>
        <position position="300"/>
    </location>
</feature>
<feature type="sequence conflict" description="In Ref. 1; AAD26336." evidence="20" ref="1">
    <original>H</original>
    <variation>R</variation>
    <location>
        <position position="140"/>
    </location>
</feature>
<keyword id="KW-0072">Autophagy</keyword>
<keyword id="KW-0119">Carbohydrate metabolism</keyword>
<keyword id="KW-1003">Cell membrane</keyword>
<keyword id="KW-0963">Cytoplasm</keyword>
<keyword id="KW-0256">Endoplasmic reticulum</keyword>
<keyword id="KW-0321">Glycogen metabolism</keyword>
<keyword id="KW-0378">Hydrolase</keyword>
<keyword id="KW-0472">Membrane</keyword>
<keyword id="KW-0597">Phosphoprotein</keyword>
<keyword id="KW-0904">Protein phosphatase</keyword>
<keyword id="KW-1185">Reference proteome</keyword>
<keyword id="KW-0832">Ubl conjugation</keyword>
<organism>
    <name type="scientific">Mus musculus</name>
    <name type="common">Mouse</name>
    <dbReference type="NCBI Taxonomy" id="10090"/>
    <lineage>
        <taxon>Eukaryota</taxon>
        <taxon>Metazoa</taxon>
        <taxon>Chordata</taxon>
        <taxon>Craniata</taxon>
        <taxon>Vertebrata</taxon>
        <taxon>Euteleostomi</taxon>
        <taxon>Mammalia</taxon>
        <taxon>Eutheria</taxon>
        <taxon>Euarchontoglires</taxon>
        <taxon>Glires</taxon>
        <taxon>Rodentia</taxon>
        <taxon>Myomorpha</taxon>
        <taxon>Muroidea</taxon>
        <taxon>Muridae</taxon>
        <taxon>Murinae</taxon>
        <taxon>Mus</taxon>
        <taxon>Mus</taxon>
    </lineage>
</organism>
<sequence length="330" mass="36958">MLFRFGVVVPPAVAGARQELLLAGSRPELGRWEPHGAVRLRPAGTAAGAAALALQEPGLWLAEVELEAYEEAGGAEPGRVDTFWYKFLQREPGGELHWEGNGPHHDRCCTYNEDNLVDGVYCLPVGHWIEATGHTNEMKHTTDFYFNIAGHQAMHYSRILPNIWLGSCPRQLEHVTIKLKHELGVTAVMNFQTEWDIIQNSSGCNRYPEPMTPDTMMKLYKEEGLSYIWMPTPDMSTEGRVQMLPQAVCLLHALLENGHTVYVHCNAGVGRSTAAVCGWLHYVIGWNLRKVQYFIMAKRPAVYIDEDALAQAQQDFSQKFGKVHSSICAL</sequence>
<dbReference type="EC" id="3.1.3.-" evidence="8 9 18"/>
<dbReference type="EC" id="3.1.3.16"/>
<dbReference type="EC" id="3.1.3.48" evidence="8"/>
<dbReference type="EMBL" id="AF124044">
    <property type="protein sequence ID" value="AAD26336.1"/>
    <property type="molecule type" value="mRNA"/>
</dbReference>
<dbReference type="EMBL" id="AC101984">
    <property type="status" value="NOT_ANNOTATED_CDS"/>
    <property type="molecule type" value="Genomic_DNA"/>
</dbReference>
<dbReference type="EMBL" id="AC157018">
    <property type="status" value="NOT_ANNOTATED_CDS"/>
    <property type="molecule type" value="Genomic_DNA"/>
</dbReference>
<dbReference type="EMBL" id="CH466562">
    <property type="protein sequence ID" value="EDL03516.1"/>
    <property type="molecule type" value="Genomic_DNA"/>
</dbReference>
<dbReference type="EMBL" id="AK041609">
    <property type="protein sequence ID" value="BAC31004.1"/>
    <property type="molecule type" value="mRNA"/>
</dbReference>
<dbReference type="CCDS" id="CCDS23698.1"/>
<dbReference type="RefSeq" id="NP_034276.2">
    <property type="nucleotide sequence ID" value="NM_010146.3"/>
</dbReference>
<dbReference type="SMR" id="Q9WUA5"/>
<dbReference type="BioGRID" id="199484">
    <property type="interactions" value="4"/>
</dbReference>
<dbReference type="CORUM" id="Q9WUA5"/>
<dbReference type="FunCoup" id="Q9WUA5">
    <property type="interactions" value="163"/>
</dbReference>
<dbReference type="IntAct" id="Q9WUA5">
    <property type="interactions" value="3"/>
</dbReference>
<dbReference type="MINT" id="Q9WUA5"/>
<dbReference type="STRING" id="10090.ENSMUSP00000066050"/>
<dbReference type="CAZy" id="CBM20">
    <property type="family name" value="Carbohydrate-Binding Module Family 20"/>
</dbReference>
<dbReference type="PhosphoSitePlus" id="Q9WUA5"/>
<dbReference type="jPOST" id="Q9WUA5"/>
<dbReference type="PaxDb" id="10090-ENSMUSP00000066050"/>
<dbReference type="ProteomicsDB" id="275632"/>
<dbReference type="Antibodypedia" id="19839">
    <property type="antibodies" value="534 antibodies from 38 providers"/>
</dbReference>
<dbReference type="DNASU" id="13853"/>
<dbReference type="Ensembl" id="ENSMUST00000069106.5">
    <property type="protein sequence ID" value="ENSMUSP00000066050.5"/>
    <property type="gene ID" value="ENSMUSG00000055493.5"/>
</dbReference>
<dbReference type="GeneID" id="13853"/>
<dbReference type="KEGG" id="mmu:13853"/>
<dbReference type="UCSC" id="uc007ejv.1">
    <property type="organism name" value="mouse"/>
</dbReference>
<dbReference type="AGR" id="MGI:1341085"/>
<dbReference type="CTD" id="7957"/>
<dbReference type="MGI" id="MGI:1341085">
    <property type="gene designation" value="Epm2a"/>
</dbReference>
<dbReference type="VEuPathDB" id="HostDB:ENSMUSG00000055493"/>
<dbReference type="eggNOG" id="KOG1716">
    <property type="taxonomic scope" value="Eukaryota"/>
</dbReference>
<dbReference type="GeneTree" id="ENSGT00390000010101"/>
<dbReference type="HOGENOM" id="CLU_076792_0_0_1"/>
<dbReference type="InParanoid" id="Q9WUA5"/>
<dbReference type="OMA" id="EMRHTTN"/>
<dbReference type="OrthoDB" id="273181at2759"/>
<dbReference type="PhylomeDB" id="Q9WUA5"/>
<dbReference type="TreeFam" id="TF332841"/>
<dbReference type="BioGRID-ORCS" id="13853">
    <property type="hits" value="6 hits in 76 CRISPR screens"/>
</dbReference>
<dbReference type="ChiTaRS" id="Epm2a">
    <property type="organism name" value="mouse"/>
</dbReference>
<dbReference type="PRO" id="PR:Q9WUA5"/>
<dbReference type="Proteomes" id="UP000000589">
    <property type="component" value="Chromosome 10"/>
</dbReference>
<dbReference type="RNAct" id="Q9WUA5">
    <property type="molecule type" value="protein"/>
</dbReference>
<dbReference type="Bgee" id="ENSMUSG00000055493">
    <property type="expression patterns" value="Expressed in hindlimb stylopod muscle and 84 other cell types or tissues"/>
</dbReference>
<dbReference type="GO" id="GO:0005737">
    <property type="term" value="C:cytoplasm"/>
    <property type="evidence" value="ECO:0000314"/>
    <property type="project" value="MGI"/>
</dbReference>
<dbReference type="GO" id="GO:0098554">
    <property type="term" value="C:cytoplasmic side of endoplasmic reticulum membrane"/>
    <property type="evidence" value="ECO:0000314"/>
    <property type="project" value="MGI"/>
</dbReference>
<dbReference type="GO" id="GO:0098556">
    <property type="term" value="C:cytoplasmic side of rough endoplasmic reticulum membrane"/>
    <property type="evidence" value="ECO:0000250"/>
    <property type="project" value="UniProtKB"/>
</dbReference>
<dbReference type="GO" id="GO:0005829">
    <property type="term" value="C:cytosol"/>
    <property type="evidence" value="ECO:0000315"/>
    <property type="project" value="MGI"/>
</dbReference>
<dbReference type="GO" id="GO:0030425">
    <property type="term" value="C:dendrite"/>
    <property type="evidence" value="ECO:0000314"/>
    <property type="project" value="MGI"/>
</dbReference>
<dbReference type="GO" id="GO:0005654">
    <property type="term" value="C:nucleoplasm"/>
    <property type="evidence" value="ECO:0007669"/>
    <property type="project" value="Ensembl"/>
</dbReference>
<dbReference type="GO" id="GO:0005634">
    <property type="term" value="C:nucleus"/>
    <property type="evidence" value="ECO:0000314"/>
    <property type="project" value="MGI"/>
</dbReference>
<dbReference type="GO" id="GO:0043204">
    <property type="term" value="C:perikaryon"/>
    <property type="evidence" value="ECO:0000314"/>
    <property type="project" value="MGI"/>
</dbReference>
<dbReference type="GO" id="GO:0005886">
    <property type="term" value="C:plasma membrane"/>
    <property type="evidence" value="ECO:0007669"/>
    <property type="project" value="UniProtKB-SubCell"/>
</dbReference>
<dbReference type="GO" id="GO:0004373">
    <property type="term" value="F:alpha-1,4-glucan glucosyltransferase (UDP-glucose donor) activity"/>
    <property type="evidence" value="ECO:0000270"/>
    <property type="project" value="MGI"/>
</dbReference>
<dbReference type="GO" id="GO:0030246">
    <property type="term" value="F:carbohydrate binding"/>
    <property type="evidence" value="ECO:0000250"/>
    <property type="project" value="UniProtKB"/>
</dbReference>
<dbReference type="GO" id="GO:0019203">
    <property type="term" value="F:carbohydrate phosphatase activity"/>
    <property type="evidence" value="ECO:0000314"/>
    <property type="project" value="MGI"/>
</dbReference>
<dbReference type="GO" id="GO:2001069">
    <property type="term" value="F:glycogen binding"/>
    <property type="evidence" value="ECO:0000250"/>
    <property type="project" value="UniProtKB"/>
</dbReference>
<dbReference type="GO" id="GO:0042802">
    <property type="term" value="F:identical protein binding"/>
    <property type="evidence" value="ECO:0000353"/>
    <property type="project" value="MGI"/>
</dbReference>
<dbReference type="GO" id="GO:0016791">
    <property type="term" value="F:phosphatase activity"/>
    <property type="evidence" value="ECO:0000314"/>
    <property type="project" value="MGI"/>
</dbReference>
<dbReference type="GO" id="GO:0004721">
    <property type="term" value="F:phosphoprotein phosphatase activity"/>
    <property type="evidence" value="ECO:0000314"/>
    <property type="project" value="MGI"/>
</dbReference>
<dbReference type="GO" id="GO:0030247">
    <property type="term" value="F:polysaccharide binding"/>
    <property type="evidence" value="ECO:0000314"/>
    <property type="project" value="MGI"/>
</dbReference>
<dbReference type="GO" id="GO:0042803">
    <property type="term" value="F:protein homodimerization activity"/>
    <property type="evidence" value="ECO:0007669"/>
    <property type="project" value="Ensembl"/>
</dbReference>
<dbReference type="GO" id="GO:0004722">
    <property type="term" value="F:protein serine/threonine phosphatase activity"/>
    <property type="evidence" value="ECO:0000314"/>
    <property type="project" value="MGI"/>
</dbReference>
<dbReference type="GO" id="GO:0004725">
    <property type="term" value="F:protein tyrosine phosphatase activity"/>
    <property type="evidence" value="ECO:0000314"/>
    <property type="project" value="MGI"/>
</dbReference>
<dbReference type="GO" id="GO:0008138">
    <property type="term" value="F:protein tyrosine/serine/threonine phosphatase activity"/>
    <property type="evidence" value="ECO:0000304"/>
    <property type="project" value="MGI"/>
</dbReference>
<dbReference type="GO" id="GO:2001070">
    <property type="term" value="F:starch binding"/>
    <property type="evidence" value="ECO:0000314"/>
    <property type="project" value="MGI"/>
</dbReference>
<dbReference type="GO" id="GO:0000045">
    <property type="term" value="P:autophagosome assembly"/>
    <property type="evidence" value="ECO:0000315"/>
    <property type="project" value="MGI"/>
</dbReference>
<dbReference type="GO" id="GO:0006914">
    <property type="term" value="P:autophagy"/>
    <property type="evidence" value="ECO:0000315"/>
    <property type="project" value="MGI"/>
</dbReference>
<dbReference type="GO" id="GO:0006816">
    <property type="term" value="P:calcium ion transport"/>
    <property type="evidence" value="ECO:0000315"/>
    <property type="project" value="MGI"/>
</dbReference>
<dbReference type="GO" id="GO:0046835">
    <property type="term" value="P:carbohydrate phosphorylation"/>
    <property type="evidence" value="ECO:0000315"/>
    <property type="project" value="MGI"/>
</dbReference>
<dbReference type="GO" id="GO:0014009">
    <property type="term" value="P:glial cell proliferation"/>
    <property type="evidence" value="ECO:0000316"/>
    <property type="project" value="MGI"/>
</dbReference>
<dbReference type="GO" id="GO:0005978">
    <property type="term" value="P:glycogen biosynthetic process"/>
    <property type="evidence" value="ECO:0000314"/>
    <property type="project" value="MGI"/>
</dbReference>
<dbReference type="GO" id="GO:0005977">
    <property type="term" value="P:glycogen metabolic process"/>
    <property type="evidence" value="ECO:0000315"/>
    <property type="project" value="MGI"/>
</dbReference>
<dbReference type="GO" id="GO:0046959">
    <property type="term" value="P:habituation"/>
    <property type="evidence" value="ECO:0000315"/>
    <property type="project" value="MGI"/>
</dbReference>
<dbReference type="GO" id="GO:0015813">
    <property type="term" value="P:L-glutamate transmembrane transport"/>
    <property type="evidence" value="ECO:0000315"/>
    <property type="project" value="MGI"/>
</dbReference>
<dbReference type="GO" id="GO:0007005">
    <property type="term" value="P:mitochondrion organization"/>
    <property type="evidence" value="ECO:0000315"/>
    <property type="project" value="MGI"/>
</dbReference>
<dbReference type="GO" id="GO:0045786">
    <property type="term" value="P:negative regulation of cell cycle"/>
    <property type="evidence" value="ECO:0000315"/>
    <property type="project" value="MGI"/>
</dbReference>
<dbReference type="GO" id="GO:0010629">
    <property type="term" value="P:negative regulation of gene expression"/>
    <property type="evidence" value="ECO:0000315"/>
    <property type="project" value="MGI"/>
</dbReference>
<dbReference type="GO" id="GO:0032007">
    <property type="term" value="P:negative regulation of TOR signaling"/>
    <property type="evidence" value="ECO:0000266"/>
    <property type="project" value="MGI"/>
</dbReference>
<dbReference type="GO" id="GO:0007399">
    <property type="term" value="P:nervous system development"/>
    <property type="evidence" value="ECO:0000315"/>
    <property type="project" value="MGI"/>
</dbReference>
<dbReference type="GO" id="GO:0016239">
    <property type="term" value="P:positive regulation of macroautophagy"/>
    <property type="evidence" value="ECO:0000315"/>
    <property type="project" value="MGI"/>
</dbReference>
<dbReference type="GO" id="GO:0043161">
    <property type="term" value="P:proteasome-mediated ubiquitin-dependent protein catabolic process"/>
    <property type="evidence" value="ECO:0000315"/>
    <property type="project" value="MGI"/>
</dbReference>
<dbReference type="GO" id="GO:0001558">
    <property type="term" value="P:regulation of cell growth"/>
    <property type="evidence" value="ECO:0000315"/>
    <property type="project" value="MGI"/>
</dbReference>
<dbReference type="GO" id="GO:0010468">
    <property type="term" value="P:regulation of gene expression"/>
    <property type="evidence" value="ECO:0000315"/>
    <property type="project" value="MGI"/>
</dbReference>
<dbReference type="GO" id="GO:0061136">
    <property type="term" value="P:regulation of proteasomal protein catabolic process"/>
    <property type="evidence" value="ECO:0000315"/>
    <property type="project" value="MGI"/>
</dbReference>
<dbReference type="GO" id="GO:0042306">
    <property type="term" value="P:regulation of protein import into nucleus"/>
    <property type="evidence" value="ECO:0000314"/>
    <property type="project" value="MGI"/>
</dbReference>
<dbReference type="GO" id="GO:1903076">
    <property type="term" value="P:regulation of protein localization to plasma membrane"/>
    <property type="evidence" value="ECO:0000316"/>
    <property type="project" value="MGI"/>
</dbReference>
<dbReference type="GO" id="GO:0031396">
    <property type="term" value="P:regulation of protein ubiquitination"/>
    <property type="evidence" value="ECO:0000316"/>
    <property type="project" value="MGI"/>
</dbReference>
<dbReference type="GO" id="GO:0016055">
    <property type="term" value="P:Wnt signaling pathway"/>
    <property type="evidence" value="ECO:0000315"/>
    <property type="project" value="MGI"/>
</dbReference>
<dbReference type="CDD" id="cd05806">
    <property type="entry name" value="CBM20_laforin"/>
    <property type="match status" value="1"/>
</dbReference>
<dbReference type="CDD" id="cd14526">
    <property type="entry name" value="DSP_laforin-like"/>
    <property type="match status" value="1"/>
</dbReference>
<dbReference type="FunFam" id="2.60.40.10:FF:001039">
    <property type="entry name" value="laforin isoform X1"/>
    <property type="match status" value="1"/>
</dbReference>
<dbReference type="FunFam" id="3.90.190.10:FF:000054">
    <property type="entry name" value="laforin isoform X1"/>
    <property type="match status" value="1"/>
</dbReference>
<dbReference type="Gene3D" id="2.60.40.10">
    <property type="entry name" value="Immunoglobulins"/>
    <property type="match status" value="1"/>
</dbReference>
<dbReference type="Gene3D" id="3.90.190.10">
    <property type="entry name" value="Protein tyrosine phosphatase superfamily"/>
    <property type="match status" value="1"/>
</dbReference>
<dbReference type="InterPro" id="IPR013784">
    <property type="entry name" value="Carb-bd-like_fold"/>
</dbReference>
<dbReference type="InterPro" id="IPR002044">
    <property type="entry name" value="CBM20"/>
</dbReference>
<dbReference type="InterPro" id="IPR034831">
    <property type="entry name" value="CBM20_laforin"/>
</dbReference>
<dbReference type="InterPro" id="IPR045204">
    <property type="entry name" value="DSP_laforin-like"/>
</dbReference>
<dbReference type="InterPro" id="IPR000340">
    <property type="entry name" value="Dual-sp_phosphatase_cat-dom"/>
</dbReference>
<dbReference type="InterPro" id="IPR013783">
    <property type="entry name" value="Ig-like_fold"/>
</dbReference>
<dbReference type="InterPro" id="IPR042942">
    <property type="entry name" value="Laforin"/>
</dbReference>
<dbReference type="InterPro" id="IPR029021">
    <property type="entry name" value="Prot-tyrosine_phosphatase-like"/>
</dbReference>
<dbReference type="InterPro" id="IPR016130">
    <property type="entry name" value="Tyr_Pase_AS"/>
</dbReference>
<dbReference type="InterPro" id="IPR000387">
    <property type="entry name" value="Tyr_Pase_dom"/>
</dbReference>
<dbReference type="InterPro" id="IPR020422">
    <property type="entry name" value="TYR_PHOSPHATASE_DUAL_dom"/>
</dbReference>
<dbReference type="PANTHER" id="PTHR46864">
    <property type="entry name" value="LAFORIN"/>
    <property type="match status" value="1"/>
</dbReference>
<dbReference type="PANTHER" id="PTHR46864:SF1">
    <property type="entry name" value="LAFORIN"/>
    <property type="match status" value="1"/>
</dbReference>
<dbReference type="Pfam" id="PF00686">
    <property type="entry name" value="CBM_20"/>
    <property type="match status" value="1"/>
</dbReference>
<dbReference type="Pfam" id="PF00782">
    <property type="entry name" value="DSPc"/>
    <property type="match status" value="1"/>
</dbReference>
<dbReference type="SMART" id="SM01065">
    <property type="entry name" value="CBM_2"/>
    <property type="match status" value="1"/>
</dbReference>
<dbReference type="SMART" id="SM00195">
    <property type="entry name" value="DSPc"/>
    <property type="match status" value="1"/>
</dbReference>
<dbReference type="SUPFAM" id="SSF52799">
    <property type="entry name" value="(Phosphotyrosine protein) phosphatases II"/>
    <property type="match status" value="1"/>
</dbReference>
<dbReference type="SUPFAM" id="SSF49452">
    <property type="entry name" value="Starch-binding domain-like"/>
    <property type="match status" value="1"/>
</dbReference>
<dbReference type="PROSITE" id="PS51166">
    <property type="entry name" value="CBM20"/>
    <property type="match status" value="1"/>
</dbReference>
<dbReference type="PROSITE" id="PS00383">
    <property type="entry name" value="TYR_PHOSPHATASE_1"/>
    <property type="match status" value="1"/>
</dbReference>
<dbReference type="PROSITE" id="PS50056">
    <property type="entry name" value="TYR_PHOSPHATASE_2"/>
    <property type="match status" value="1"/>
</dbReference>
<dbReference type="PROSITE" id="PS50054">
    <property type="entry name" value="TYR_PHOSPHATASE_DUAL"/>
    <property type="match status" value="1"/>
</dbReference>
<gene>
    <name type="primary">Epm2a</name>
</gene>